<proteinExistence type="inferred from homology"/>
<dbReference type="EMBL" id="CP001098">
    <property type="protein sequence ID" value="ACL68869.1"/>
    <property type="molecule type" value="Genomic_DNA"/>
</dbReference>
<dbReference type="RefSeq" id="WP_012635068.1">
    <property type="nucleotide sequence ID" value="NC_011899.1"/>
</dbReference>
<dbReference type="SMR" id="B8D0B5"/>
<dbReference type="STRING" id="373903.Hore_01080"/>
<dbReference type="KEGG" id="hor:Hore_01080"/>
<dbReference type="eggNOG" id="COG0222">
    <property type="taxonomic scope" value="Bacteria"/>
</dbReference>
<dbReference type="HOGENOM" id="CLU_086499_3_2_9"/>
<dbReference type="OrthoDB" id="9811748at2"/>
<dbReference type="Proteomes" id="UP000000719">
    <property type="component" value="Chromosome"/>
</dbReference>
<dbReference type="GO" id="GO:0022625">
    <property type="term" value="C:cytosolic large ribosomal subunit"/>
    <property type="evidence" value="ECO:0007669"/>
    <property type="project" value="TreeGrafter"/>
</dbReference>
<dbReference type="GO" id="GO:0003729">
    <property type="term" value="F:mRNA binding"/>
    <property type="evidence" value="ECO:0007669"/>
    <property type="project" value="TreeGrafter"/>
</dbReference>
<dbReference type="GO" id="GO:0003735">
    <property type="term" value="F:structural constituent of ribosome"/>
    <property type="evidence" value="ECO:0007669"/>
    <property type="project" value="InterPro"/>
</dbReference>
<dbReference type="GO" id="GO:0006412">
    <property type="term" value="P:translation"/>
    <property type="evidence" value="ECO:0007669"/>
    <property type="project" value="UniProtKB-UniRule"/>
</dbReference>
<dbReference type="CDD" id="cd00387">
    <property type="entry name" value="Ribosomal_L7_L12"/>
    <property type="match status" value="1"/>
</dbReference>
<dbReference type="FunFam" id="1.20.5.710:FF:000008">
    <property type="entry name" value="50S ribosomal protein L7/L12"/>
    <property type="match status" value="1"/>
</dbReference>
<dbReference type="FunFam" id="3.30.1390.10:FF:000001">
    <property type="entry name" value="50S ribosomal protein L7/L12"/>
    <property type="match status" value="1"/>
</dbReference>
<dbReference type="Gene3D" id="3.30.1390.10">
    <property type="match status" value="1"/>
</dbReference>
<dbReference type="Gene3D" id="1.20.5.710">
    <property type="entry name" value="Single helix bin"/>
    <property type="match status" value="1"/>
</dbReference>
<dbReference type="HAMAP" id="MF_00368">
    <property type="entry name" value="Ribosomal_bL12"/>
    <property type="match status" value="1"/>
</dbReference>
<dbReference type="InterPro" id="IPR000206">
    <property type="entry name" value="Ribosomal_bL12"/>
</dbReference>
<dbReference type="InterPro" id="IPR013823">
    <property type="entry name" value="Ribosomal_bL12_C"/>
</dbReference>
<dbReference type="InterPro" id="IPR014719">
    <property type="entry name" value="Ribosomal_bL12_C/ClpS-like"/>
</dbReference>
<dbReference type="InterPro" id="IPR008932">
    <property type="entry name" value="Ribosomal_bL12_oligo"/>
</dbReference>
<dbReference type="InterPro" id="IPR036235">
    <property type="entry name" value="Ribosomal_bL12_oligo_N_sf"/>
</dbReference>
<dbReference type="NCBIfam" id="TIGR00855">
    <property type="entry name" value="L12"/>
    <property type="match status" value="1"/>
</dbReference>
<dbReference type="PANTHER" id="PTHR45987">
    <property type="entry name" value="39S RIBOSOMAL PROTEIN L12"/>
    <property type="match status" value="1"/>
</dbReference>
<dbReference type="PANTHER" id="PTHR45987:SF4">
    <property type="entry name" value="LARGE RIBOSOMAL SUBUNIT PROTEIN BL12M"/>
    <property type="match status" value="1"/>
</dbReference>
<dbReference type="Pfam" id="PF00542">
    <property type="entry name" value="Ribosomal_L12"/>
    <property type="match status" value="1"/>
</dbReference>
<dbReference type="Pfam" id="PF16320">
    <property type="entry name" value="Ribosomal_L12_N"/>
    <property type="match status" value="1"/>
</dbReference>
<dbReference type="SUPFAM" id="SSF54736">
    <property type="entry name" value="ClpS-like"/>
    <property type="match status" value="1"/>
</dbReference>
<dbReference type="SUPFAM" id="SSF48300">
    <property type="entry name" value="Ribosomal protein L7/12, oligomerisation (N-terminal) domain"/>
    <property type="match status" value="1"/>
</dbReference>
<feature type="chain" id="PRO_1000195799" description="Large ribosomal subunit protein bL12">
    <location>
        <begin position="1"/>
        <end position="123"/>
    </location>
</feature>
<feature type="region of interest" description="Disordered" evidence="2">
    <location>
        <begin position="98"/>
        <end position="123"/>
    </location>
</feature>
<feature type="compositionally biased region" description="Basic and acidic residues" evidence="2">
    <location>
        <begin position="100"/>
        <end position="115"/>
    </location>
</feature>
<accession>B8D0B5</accession>
<sequence length="123" mass="13116">MTKEEIIEAIENMTVLELAELVEELEEKFGVSAAAPVAMAAVPGAQGGEQQEEKTEFDVHLAEIGGKKINVIKVVREVTGLGLKDAKALVDDAPTNVKEGVSKEEAEEIKSKLEDAGATVELK</sequence>
<keyword id="KW-1185">Reference proteome</keyword>
<keyword id="KW-0687">Ribonucleoprotein</keyword>
<keyword id="KW-0689">Ribosomal protein</keyword>
<comment type="function">
    <text evidence="1">Forms part of the ribosomal stalk which helps the ribosome interact with GTP-bound translation factors. Is thus essential for accurate translation.</text>
</comment>
<comment type="subunit">
    <text evidence="1">Homodimer. Part of the ribosomal stalk of the 50S ribosomal subunit. Forms a multimeric L10(L12)X complex, where L10 forms an elongated spine to which 2 to 4 L12 dimers bind in a sequential fashion. Binds GTP-bound translation factors.</text>
</comment>
<comment type="similarity">
    <text evidence="1">Belongs to the bacterial ribosomal protein bL12 family.</text>
</comment>
<evidence type="ECO:0000255" key="1">
    <source>
        <dbReference type="HAMAP-Rule" id="MF_00368"/>
    </source>
</evidence>
<evidence type="ECO:0000256" key="2">
    <source>
        <dbReference type="SAM" id="MobiDB-lite"/>
    </source>
</evidence>
<evidence type="ECO:0000305" key="3"/>
<reference key="1">
    <citation type="journal article" date="2009" name="PLoS ONE">
        <title>Genome analysis of the anaerobic thermohalophilic bacterium Halothermothrix orenii.</title>
        <authorList>
            <person name="Mavromatis K."/>
            <person name="Ivanova N."/>
            <person name="Anderson I."/>
            <person name="Lykidis A."/>
            <person name="Hooper S.D."/>
            <person name="Sun H."/>
            <person name="Kunin V."/>
            <person name="Lapidus A."/>
            <person name="Hugenholtz P."/>
            <person name="Patel B."/>
            <person name="Kyrpides N.C."/>
        </authorList>
    </citation>
    <scope>NUCLEOTIDE SEQUENCE [LARGE SCALE GENOMIC DNA]</scope>
    <source>
        <strain>H 168 / OCM 544 / DSM 9562</strain>
    </source>
</reference>
<organism>
    <name type="scientific">Halothermothrix orenii (strain H 168 / OCM 544 / DSM 9562)</name>
    <dbReference type="NCBI Taxonomy" id="373903"/>
    <lineage>
        <taxon>Bacteria</taxon>
        <taxon>Bacillati</taxon>
        <taxon>Bacillota</taxon>
        <taxon>Clostridia</taxon>
        <taxon>Halanaerobiales</taxon>
        <taxon>Halothermotrichaceae</taxon>
        <taxon>Halothermothrix</taxon>
    </lineage>
</organism>
<protein>
    <recommendedName>
        <fullName evidence="1">Large ribosomal subunit protein bL12</fullName>
    </recommendedName>
    <alternativeName>
        <fullName evidence="3">50S ribosomal protein L7/L12</fullName>
    </alternativeName>
</protein>
<name>RL7_HALOH</name>
<gene>
    <name evidence="1" type="primary">rplL</name>
    <name type="ordered locus">Hore_01080</name>
</gene>